<name>RL4_ANAPZ</name>
<proteinExistence type="inferred from homology"/>
<protein>
    <recommendedName>
        <fullName evidence="1">Large ribosomal subunit protein uL4</fullName>
    </recommendedName>
    <alternativeName>
        <fullName evidence="3">50S ribosomal protein L4</fullName>
    </alternativeName>
</protein>
<reference key="1">
    <citation type="journal article" date="2006" name="PLoS Genet.">
        <title>Comparative genomics of emerging human ehrlichiosis agents.</title>
        <authorList>
            <person name="Dunning Hotopp J.C."/>
            <person name="Lin M."/>
            <person name="Madupu R."/>
            <person name="Crabtree J."/>
            <person name="Angiuoli S.V."/>
            <person name="Eisen J.A."/>
            <person name="Seshadri R."/>
            <person name="Ren Q."/>
            <person name="Wu M."/>
            <person name="Utterback T.R."/>
            <person name="Smith S."/>
            <person name="Lewis M."/>
            <person name="Khouri H."/>
            <person name="Zhang C."/>
            <person name="Niu H."/>
            <person name="Lin Q."/>
            <person name="Ohashi N."/>
            <person name="Zhi N."/>
            <person name="Nelson W.C."/>
            <person name="Brinkac L.M."/>
            <person name="Dodson R.J."/>
            <person name="Rosovitz M.J."/>
            <person name="Sundaram J.P."/>
            <person name="Daugherty S.C."/>
            <person name="Davidsen T."/>
            <person name="Durkin A.S."/>
            <person name="Gwinn M.L."/>
            <person name="Haft D.H."/>
            <person name="Selengut J.D."/>
            <person name="Sullivan S.A."/>
            <person name="Zafar N."/>
            <person name="Zhou L."/>
            <person name="Benahmed F."/>
            <person name="Forberger H."/>
            <person name="Halpin R."/>
            <person name="Mulligan S."/>
            <person name="Robinson J."/>
            <person name="White O."/>
            <person name="Rikihisa Y."/>
            <person name="Tettelin H."/>
        </authorList>
    </citation>
    <scope>NUCLEOTIDE SEQUENCE [LARGE SCALE GENOMIC DNA]</scope>
    <source>
        <strain>HZ</strain>
    </source>
</reference>
<gene>
    <name evidence="1" type="primary">rplD</name>
    <name type="ordered locus">APH_0281</name>
</gene>
<comment type="function">
    <text evidence="1">One of the primary rRNA binding proteins, this protein initially binds near the 5'-end of the 23S rRNA. It is important during the early stages of 50S assembly. It makes multiple contacts with different domains of the 23S rRNA in the assembled 50S subunit and ribosome.</text>
</comment>
<comment type="function">
    <text evidence="1">Forms part of the polypeptide exit tunnel.</text>
</comment>
<comment type="subunit">
    <text evidence="1">Part of the 50S ribosomal subunit.</text>
</comment>
<comment type="similarity">
    <text evidence="1">Belongs to the universal ribosomal protein uL4 family.</text>
</comment>
<dbReference type="EMBL" id="CP000235">
    <property type="protein sequence ID" value="ABD43319.1"/>
    <property type="molecule type" value="Genomic_DNA"/>
</dbReference>
<dbReference type="RefSeq" id="WP_011450416.1">
    <property type="nucleotide sequence ID" value="NC_007797.1"/>
</dbReference>
<dbReference type="SMR" id="Q2GL58"/>
<dbReference type="STRING" id="212042.APH_0281"/>
<dbReference type="PaxDb" id="212042-APH_0281"/>
<dbReference type="EnsemblBacteria" id="ABD43319">
    <property type="protein sequence ID" value="ABD43319"/>
    <property type="gene ID" value="APH_0281"/>
</dbReference>
<dbReference type="GeneID" id="92747522"/>
<dbReference type="KEGG" id="aph:APH_0281"/>
<dbReference type="eggNOG" id="COG0088">
    <property type="taxonomic scope" value="Bacteria"/>
</dbReference>
<dbReference type="HOGENOM" id="CLU_041575_5_1_5"/>
<dbReference type="Proteomes" id="UP000001943">
    <property type="component" value="Chromosome"/>
</dbReference>
<dbReference type="GO" id="GO:1990904">
    <property type="term" value="C:ribonucleoprotein complex"/>
    <property type="evidence" value="ECO:0007669"/>
    <property type="project" value="UniProtKB-KW"/>
</dbReference>
<dbReference type="GO" id="GO:0005840">
    <property type="term" value="C:ribosome"/>
    <property type="evidence" value="ECO:0007669"/>
    <property type="project" value="UniProtKB-KW"/>
</dbReference>
<dbReference type="GO" id="GO:0019843">
    <property type="term" value="F:rRNA binding"/>
    <property type="evidence" value="ECO:0007669"/>
    <property type="project" value="UniProtKB-UniRule"/>
</dbReference>
<dbReference type="GO" id="GO:0003735">
    <property type="term" value="F:structural constituent of ribosome"/>
    <property type="evidence" value="ECO:0007669"/>
    <property type="project" value="InterPro"/>
</dbReference>
<dbReference type="GO" id="GO:0006412">
    <property type="term" value="P:translation"/>
    <property type="evidence" value="ECO:0007669"/>
    <property type="project" value="UniProtKB-UniRule"/>
</dbReference>
<dbReference type="Gene3D" id="3.40.1370.10">
    <property type="match status" value="1"/>
</dbReference>
<dbReference type="HAMAP" id="MF_01328_B">
    <property type="entry name" value="Ribosomal_uL4_B"/>
    <property type="match status" value="1"/>
</dbReference>
<dbReference type="InterPro" id="IPR002136">
    <property type="entry name" value="Ribosomal_uL4"/>
</dbReference>
<dbReference type="InterPro" id="IPR013005">
    <property type="entry name" value="Ribosomal_uL4-like"/>
</dbReference>
<dbReference type="InterPro" id="IPR023574">
    <property type="entry name" value="Ribosomal_uL4_dom_sf"/>
</dbReference>
<dbReference type="NCBIfam" id="TIGR03953">
    <property type="entry name" value="rplD_bact"/>
    <property type="match status" value="1"/>
</dbReference>
<dbReference type="PANTHER" id="PTHR10746">
    <property type="entry name" value="50S RIBOSOMAL PROTEIN L4"/>
    <property type="match status" value="1"/>
</dbReference>
<dbReference type="PANTHER" id="PTHR10746:SF6">
    <property type="entry name" value="LARGE RIBOSOMAL SUBUNIT PROTEIN UL4M"/>
    <property type="match status" value="1"/>
</dbReference>
<dbReference type="Pfam" id="PF00573">
    <property type="entry name" value="Ribosomal_L4"/>
    <property type="match status" value="1"/>
</dbReference>
<dbReference type="SUPFAM" id="SSF52166">
    <property type="entry name" value="Ribosomal protein L4"/>
    <property type="match status" value="1"/>
</dbReference>
<evidence type="ECO:0000255" key="1">
    <source>
        <dbReference type="HAMAP-Rule" id="MF_01328"/>
    </source>
</evidence>
<evidence type="ECO:0000256" key="2">
    <source>
        <dbReference type="SAM" id="MobiDB-lite"/>
    </source>
</evidence>
<evidence type="ECO:0000305" key="3"/>
<feature type="chain" id="PRO_0000242334" description="Large ribosomal subunit protein uL4">
    <location>
        <begin position="1"/>
        <end position="208"/>
    </location>
</feature>
<feature type="region of interest" description="Disordered" evidence="2">
    <location>
        <begin position="49"/>
        <end position="78"/>
    </location>
</feature>
<accession>Q2GL58</accession>
<organism>
    <name type="scientific">Anaplasma phagocytophilum (strain HZ)</name>
    <dbReference type="NCBI Taxonomy" id="212042"/>
    <lineage>
        <taxon>Bacteria</taxon>
        <taxon>Pseudomonadati</taxon>
        <taxon>Pseudomonadota</taxon>
        <taxon>Alphaproteobacteria</taxon>
        <taxon>Rickettsiales</taxon>
        <taxon>Anaplasmataceae</taxon>
        <taxon>Anaplasma</taxon>
        <taxon>phagocytophilum group</taxon>
    </lineage>
</organism>
<sequence length="208" mass="22795">MEVNIVNIANEVVGSIDLNPQVFGLEPRRDVLKEVVNWQLAKRRAGTHKAKGISDISGTTAKPYRQKHTGRARQGSLRSPQFRGGAVIFGPVPRSHEYSLNKKVRRLGLKVALSMKVAANKLVVLDSLDVDLKKTADAKGVFGNFAGHSSYLVVSESCKEEVVRACRNLRGVDLLKCVGINVLDILKHDCVILTVDTVKSLEGRLSNE</sequence>
<keyword id="KW-0687">Ribonucleoprotein</keyword>
<keyword id="KW-0689">Ribosomal protein</keyword>
<keyword id="KW-0694">RNA-binding</keyword>
<keyword id="KW-0699">rRNA-binding</keyword>